<accession>Q66CH5</accession>
<feature type="chain" id="PRO_0000211617" description="Chromosome partition protein MukF">
    <location>
        <begin position="1"/>
        <end position="440"/>
    </location>
</feature>
<feature type="region of interest" description="Leucine-zipper">
    <location>
        <begin position="208"/>
        <end position="236"/>
    </location>
</feature>
<comment type="function">
    <text evidence="1">Involved in chromosome condensation, segregation and cell cycle progression. May participate in facilitating chromosome segregation by condensation DNA from both sides of a centrally located replisome during cell division. Not required for mini-F plasmid partitioning. Probably acts via its interaction with MukB and MukE. Overexpression results in anucleate cells. It has a calcium binding activity.</text>
</comment>
<comment type="subunit">
    <text evidence="1">Interacts, and probably forms a ternary complex, with MukE and MukB via its C-terminal region. The complex formation is stimulated by calcium or magnesium. It is required for an interaction between MukE and MukB.</text>
</comment>
<comment type="subcellular location">
    <subcellularLocation>
        <location evidence="1">Cytoplasm</location>
        <location evidence="1">Nucleoid</location>
    </subcellularLocation>
    <text evidence="1">Restricted to the nucleoid region.</text>
</comment>
<comment type="similarity">
    <text evidence="1">Belongs to the MukF family.</text>
</comment>
<gene>
    <name evidence="1" type="primary">mukF</name>
    <name type="synonym">kicB</name>
    <name type="ordered locus">YPTB1428</name>
</gene>
<reference key="1">
    <citation type="journal article" date="2004" name="Proc. Natl. Acad. Sci. U.S.A.">
        <title>Insights into the evolution of Yersinia pestis through whole-genome comparison with Yersinia pseudotuberculosis.</title>
        <authorList>
            <person name="Chain P.S.G."/>
            <person name="Carniel E."/>
            <person name="Larimer F.W."/>
            <person name="Lamerdin J."/>
            <person name="Stoutland P.O."/>
            <person name="Regala W.M."/>
            <person name="Georgescu A.M."/>
            <person name="Vergez L.M."/>
            <person name="Land M.L."/>
            <person name="Motin V.L."/>
            <person name="Brubaker R.R."/>
            <person name="Fowler J."/>
            <person name="Hinnebusch J."/>
            <person name="Marceau M."/>
            <person name="Medigue C."/>
            <person name="Simonet M."/>
            <person name="Chenal-Francisque V."/>
            <person name="Souza B."/>
            <person name="Dacheux D."/>
            <person name="Elliott J.M."/>
            <person name="Derbise A."/>
            <person name="Hauser L.J."/>
            <person name="Garcia E."/>
        </authorList>
    </citation>
    <scope>NUCLEOTIDE SEQUENCE [LARGE SCALE GENOMIC DNA]</scope>
    <source>
        <strain>IP32953</strain>
    </source>
</reference>
<evidence type="ECO:0000255" key="1">
    <source>
        <dbReference type="HAMAP-Rule" id="MF_01803"/>
    </source>
</evidence>
<protein>
    <recommendedName>
        <fullName evidence="1">Chromosome partition protein MukF</fullName>
    </recommendedName>
</protein>
<name>MUKF_YERPS</name>
<proteinExistence type="inferred from homology"/>
<dbReference type="EMBL" id="BX936398">
    <property type="protein sequence ID" value="CAH20668.1"/>
    <property type="molecule type" value="Genomic_DNA"/>
</dbReference>
<dbReference type="RefSeq" id="WP_002211310.1">
    <property type="nucleotide sequence ID" value="NZ_CP009712.1"/>
</dbReference>
<dbReference type="SMR" id="Q66CH5"/>
<dbReference type="GeneID" id="57977199"/>
<dbReference type="KEGG" id="ypo:BZ17_1089"/>
<dbReference type="KEGG" id="yps:YPTB1428"/>
<dbReference type="PATRIC" id="fig|273123.14.peg.1155"/>
<dbReference type="Proteomes" id="UP000001011">
    <property type="component" value="Chromosome"/>
</dbReference>
<dbReference type="GO" id="GO:0005737">
    <property type="term" value="C:cytoplasm"/>
    <property type="evidence" value="ECO:0007669"/>
    <property type="project" value="UniProtKB-UniRule"/>
</dbReference>
<dbReference type="GO" id="GO:0009295">
    <property type="term" value="C:nucleoid"/>
    <property type="evidence" value="ECO:0007669"/>
    <property type="project" value="UniProtKB-SubCell"/>
</dbReference>
<dbReference type="GO" id="GO:0005509">
    <property type="term" value="F:calcium ion binding"/>
    <property type="evidence" value="ECO:0007669"/>
    <property type="project" value="UniProtKB-UniRule"/>
</dbReference>
<dbReference type="GO" id="GO:0051301">
    <property type="term" value="P:cell division"/>
    <property type="evidence" value="ECO:0007669"/>
    <property type="project" value="UniProtKB-KW"/>
</dbReference>
<dbReference type="GO" id="GO:0030261">
    <property type="term" value="P:chromosome condensation"/>
    <property type="evidence" value="ECO:0007669"/>
    <property type="project" value="UniProtKB-KW"/>
</dbReference>
<dbReference type="GO" id="GO:0007059">
    <property type="term" value="P:chromosome segregation"/>
    <property type="evidence" value="ECO:0007669"/>
    <property type="project" value="UniProtKB-UniRule"/>
</dbReference>
<dbReference type="GO" id="GO:0006260">
    <property type="term" value="P:DNA replication"/>
    <property type="evidence" value="ECO:0007669"/>
    <property type="project" value="UniProtKB-UniRule"/>
</dbReference>
<dbReference type="CDD" id="cd16337">
    <property type="entry name" value="MukF_C"/>
    <property type="match status" value="1"/>
</dbReference>
<dbReference type="CDD" id="cd16335">
    <property type="entry name" value="MukF_N"/>
    <property type="match status" value="1"/>
</dbReference>
<dbReference type="Gene3D" id="1.20.58.590">
    <property type="entry name" value="Chromosome partition protein MukF, middle domain"/>
    <property type="match status" value="1"/>
</dbReference>
<dbReference type="Gene3D" id="1.10.225.40">
    <property type="entry name" value="MukF, C-terminal domain"/>
    <property type="match status" value="1"/>
</dbReference>
<dbReference type="Gene3D" id="1.10.10.10">
    <property type="entry name" value="Winged helix-like DNA-binding domain superfamily/Winged helix DNA-binding domain"/>
    <property type="match status" value="1"/>
</dbReference>
<dbReference type="HAMAP" id="MF_01803">
    <property type="entry name" value="MukF"/>
    <property type="match status" value="1"/>
</dbReference>
<dbReference type="InterPro" id="IPR005582">
    <property type="entry name" value="Chromosome_partition_MukF"/>
</dbReference>
<dbReference type="InterPro" id="IPR033441">
    <property type="entry name" value="MukF_C"/>
</dbReference>
<dbReference type="InterPro" id="IPR038198">
    <property type="entry name" value="MukF_C_sf"/>
</dbReference>
<dbReference type="InterPro" id="IPR033440">
    <property type="entry name" value="MukF_M"/>
</dbReference>
<dbReference type="InterPro" id="IPR036141">
    <property type="entry name" value="MukF_M_sp"/>
</dbReference>
<dbReference type="InterPro" id="IPR033439">
    <property type="entry name" value="MukF_WHTH"/>
</dbReference>
<dbReference type="InterPro" id="IPR010916">
    <property type="entry name" value="TonB_box_CS"/>
</dbReference>
<dbReference type="InterPro" id="IPR036388">
    <property type="entry name" value="WH-like_DNA-bd_sf"/>
</dbReference>
<dbReference type="InterPro" id="IPR036390">
    <property type="entry name" value="WH_DNA-bd_sf"/>
</dbReference>
<dbReference type="NCBIfam" id="NF003615">
    <property type="entry name" value="PRK05260.1"/>
    <property type="match status" value="1"/>
</dbReference>
<dbReference type="Pfam" id="PF03882">
    <property type="entry name" value="KicB"/>
    <property type="match status" value="1"/>
</dbReference>
<dbReference type="Pfam" id="PF17193">
    <property type="entry name" value="MukF_C"/>
    <property type="match status" value="1"/>
</dbReference>
<dbReference type="Pfam" id="PF17192">
    <property type="entry name" value="MukF_M"/>
    <property type="match status" value="1"/>
</dbReference>
<dbReference type="PIRSF" id="PIRSF018282">
    <property type="entry name" value="MukF"/>
    <property type="match status" value="1"/>
</dbReference>
<dbReference type="SUPFAM" id="SSF140570">
    <property type="entry name" value="MukF C-terminal domain-like"/>
    <property type="match status" value="1"/>
</dbReference>
<dbReference type="SUPFAM" id="SSF46785">
    <property type="entry name" value="Winged helix' DNA-binding domain"/>
    <property type="match status" value="1"/>
</dbReference>
<sequence>MSEFSQTVPELVAWARKNDFSITLPTERLAFLMAIAALNGERLDGEMSEGELVDAFRHVSKGFEQTTETVTVRANNAINDMVRQRLLNRFTSELADGNAIYRLTPLGIGITDYYIRQREFSTLRLSMQLSIVAQELQRAAEAAEEGGDEFHWHRNVFAPLKYSVAEIFDSIDMTQRLMDEQQHSVKEDIAALLNQDWRAAIASCEMLLSETSGTLRELQDTLEAAGDKLQANLLRIQEATIGNAGLDLVDKLVFDLQSKLDRIISWGQQAIDLWIGYDRHVHKFIRTAIDMDKNRVFAQRLRQSVQHYFDNPWTLTHANADRLLDMRDEELALRSEEVTGELPPDLEFEEFNAIREQLTAMIEQALLVYQQQQIPLNLGEVMRDYLAQYPRARHFDVARILVDQAVRLGVAEADFSGLPAEWLAINDYGAKVQAHVINKY</sequence>
<organism>
    <name type="scientific">Yersinia pseudotuberculosis serotype I (strain IP32953)</name>
    <dbReference type="NCBI Taxonomy" id="273123"/>
    <lineage>
        <taxon>Bacteria</taxon>
        <taxon>Pseudomonadati</taxon>
        <taxon>Pseudomonadota</taxon>
        <taxon>Gammaproteobacteria</taxon>
        <taxon>Enterobacterales</taxon>
        <taxon>Yersiniaceae</taxon>
        <taxon>Yersinia</taxon>
    </lineage>
</organism>
<keyword id="KW-0106">Calcium</keyword>
<keyword id="KW-0131">Cell cycle</keyword>
<keyword id="KW-0132">Cell division</keyword>
<keyword id="KW-0159">Chromosome partition</keyword>
<keyword id="KW-0963">Cytoplasm</keyword>
<keyword id="KW-0226">DNA condensation</keyword>